<organism>
    <name type="scientific">Arabidopsis thaliana</name>
    <name type="common">Mouse-ear cress</name>
    <dbReference type="NCBI Taxonomy" id="3702"/>
    <lineage>
        <taxon>Eukaryota</taxon>
        <taxon>Viridiplantae</taxon>
        <taxon>Streptophyta</taxon>
        <taxon>Embryophyta</taxon>
        <taxon>Tracheophyta</taxon>
        <taxon>Spermatophyta</taxon>
        <taxon>Magnoliopsida</taxon>
        <taxon>eudicotyledons</taxon>
        <taxon>Gunneridae</taxon>
        <taxon>Pentapetalae</taxon>
        <taxon>rosids</taxon>
        <taxon>malvids</taxon>
        <taxon>Brassicales</taxon>
        <taxon>Brassicaceae</taxon>
        <taxon>Camelineae</taxon>
        <taxon>Arabidopsis</taxon>
    </lineage>
</organism>
<feature type="signal peptide" evidence="2">
    <location>
        <begin position="1"/>
        <end position="23"/>
    </location>
</feature>
<feature type="chain" id="PRO_0000253304" description="Wall-associated receptor kinase 5">
    <location>
        <begin position="24"/>
        <end position="733"/>
    </location>
</feature>
<feature type="topological domain" description="Extracellular" evidence="2">
    <location>
        <begin position="24"/>
        <end position="330"/>
    </location>
</feature>
<feature type="transmembrane region" description="Helical" evidence="2">
    <location>
        <begin position="331"/>
        <end position="351"/>
    </location>
</feature>
<feature type="topological domain" description="Cytoplasmic" evidence="2">
    <location>
        <begin position="352"/>
        <end position="733"/>
    </location>
</feature>
<feature type="domain" description="EGF-like 1" evidence="3">
    <location>
        <begin position="231"/>
        <end position="278"/>
    </location>
</feature>
<feature type="domain" description="EGF-like 2; calcium-binding" evidence="3">
    <location>
        <begin position="279"/>
        <end position="321"/>
    </location>
</feature>
<feature type="domain" description="Protein kinase" evidence="4">
    <location>
        <begin position="408"/>
        <end position="691"/>
    </location>
</feature>
<feature type="active site" description="Proton acceptor" evidence="4 5">
    <location>
        <position position="533"/>
    </location>
</feature>
<feature type="binding site" evidence="4">
    <location>
        <begin position="414"/>
        <end position="422"/>
    </location>
    <ligand>
        <name>ATP</name>
        <dbReference type="ChEBI" id="CHEBI:30616"/>
    </ligand>
</feature>
<feature type="binding site" evidence="4">
    <location>
        <position position="436"/>
    </location>
    <ligand>
        <name>ATP</name>
        <dbReference type="ChEBI" id="CHEBI:30616"/>
    </ligand>
</feature>
<feature type="modified residue" description="Phosphothreonine" evidence="1">
    <location>
        <position position="397"/>
    </location>
</feature>
<feature type="modified residue" description="Phosphotyrosine" evidence="1">
    <location>
        <position position="481"/>
    </location>
</feature>
<feature type="modified residue" description="Phosphothreonine" evidence="1">
    <location>
        <position position="567"/>
    </location>
</feature>
<feature type="modified residue" description="Phosphothreonine" evidence="1">
    <location>
        <position position="572"/>
    </location>
</feature>
<feature type="modified residue" description="Phosphotyrosine" evidence="1">
    <location>
        <position position="580"/>
    </location>
</feature>
<feature type="glycosylation site" description="N-linked (GlcNAc...) asparagine" evidence="2">
    <location>
        <position position="57"/>
    </location>
</feature>
<feature type="glycosylation site" description="N-linked (GlcNAc...) asparagine" evidence="2">
    <location>
        <position position="77"/>
    </location>
</feature>
<feature type="glycosylation site" description="N-linked (GlcNAc...) asparagine" evidence="2">
    <location>
        <position position="110"/>
    </location>
</feature>
<feature type="glycosylation site" description="N-linked (GlcNAc...) asparagine" evidence="2">
    <location>
        <position position="137"/>
    </location>
</feature>
<feature type="glycosylation site" description="N-linked (GlcNAc...) asparagine" evidence="2">
    <location>
        <position position="184"/>
    </location>
</feature>
<feature type="glycosylation site" description="N-linked (GlcNAc...) asparagine" evidence="2">
    <location>
        <position position="206"/>
    </location>
</feature>
<feature type="glycosylation site" description="N-linked (GlcNAc...) asparagine" evidence="2">
    <location>
        <position position="218"/>
    </location>
</feature>
<feature type="glycosylation site" description="N-linked (GlcNAc...) asparagine" evidence="2">
    <location>
        <position position="232"/>
    </location>
</feature>
<feature type="glycosylation site" description="N-linked (GlcNAc...) asparagine" evidence="2">
    <location>
        <position position="247"/>
    </location>
</feature>
<feature type="glycosylation site" description="N-linked (GlcNAc...) asparagine" evidence="2">
    <location>
        <position position="289"/>
    </location>
</feature>
<feature type="glycosylation site" description="N-linked (GlcNAc...) asparagine" evidence="2">
    <location>
        <position position="314"/>
    </location>
</feature>
<feature type="disulfide bond" evidence="3">
    <location>
        <begin position="235"/>
        <end position="250"/>
    </location>
</feature>
<feature type="disulfide bond" evidence="3">
    <location>
        <begin position="244"/>
        <end position="261"/>
    </location>
</feature>
<feature type="disulfide bond" evidence="3">
    <location>
        <begin position="263"/>
        <end position="277"/>
    </location>
</feature>
<feature type="disulfide bond" evidence="3">
    <location>
        <begin position="283"/>
        <end position="296"/>
    </location>
</feature>
<feature type="disulfide bond" evidence="3">
    <location>
        <begin position="290"/>
        <end position="305"/>
    </location>
</feature>
<feature type="disulfide bond" evidence="3">
    <location>
        <begin position="307"/>
        <end position="320"/>
    </location>
</feature>
<proteinExistence type="evidence at transcript level"/>
<dbReference type="EC" id="2.7.11.-"/>
<dbReference type="EMBL" id="AC036104">
    <property type="protein sequence ID" value="AAF81359.1"/>
    <property type="molecule type" value="Genomic_DNA"/>
</dbReference>
<dbReference type="EMBL" id="CP002684">
    <property type="protein sequence ID" value="AEE30076.1"/>
    <property type="molecule type" value="Genomic_DNA"/>
</dbReference>
<dbReference type="PIR" id="E86345">
    <property type="entry name" value="E86345"/>
</dbReference>
<dbReference type="RefSeq" id="NP_173546.1">
    <property type="nucleotide sequence ID" value="NM_101976.2"/>
</dbReference>
<dbReference type="SMR" id="Q9LMN7"/>
<dbReference type="BioGRID" id="23957">
    <property type="interactions" value="1"/>
</dbReference>
<dbReference type="IntAct" id="Q9LMN7">
    <property type="interactions" value="1"/>
</dbReference>
<dbReference type="STRING" id="3702.Q9LMN7"/>
<dbReference type="GlyCosmos" id="Q9LMN7">
    <property type="glycosylation" value="11 sites, No reported glycans"/>
</dbReference>
<dbReference type="GlyGen" id="Q9LMN7">
    <property type="glycosylation" value="11 sites"/>
</dbReference>
<dbReference type="PaxDb" id="3702-AT1G21230.1"/>
<dbReference type="ProteomicsDB" id="242650"/>
<dbReference type="EnsemblPlants" id="AT1G21230.1">
    <property type="protein sequence ID" value="AT1G21230.1"/>
    <property type="gene ID" value="AT1G21230"/>
</dbReference>
<dbReference type="GeneID" id="838718"/>
<dbReference type="Gramene" id="AT1G21230.1">
    <property type="protein sequence ID" value="AT1G21230.1"/>
    <property type="gene ID" value="AT1G21230"/>
</dbReference>
<dbReference type="KEGG" id="ath:AT1G21230"/>
<dbReference type="Araport" id="AT1G21230"/>
<dbReference type="TAIR" id="AT1G21230">
    <property type="gene designation" value="WAK5"/>
</dbReference>
<dbReference type="eggNOG" id="ENOG502QQPF">
    <property type="taxonomic scope" value="Eukaryota"/>
</dbReference>
<dbReference type="HOGENOM" id="CLU_000288_43_5_1"/>
<dbReference type="InParanoid" id="Q9LMN7"/>
<dbReference type="OMA" id="VECTRIM"/>
<dbReference type="PhylomeDB" id="Q9LMN7"/>
<dbReference type="PRO" id="PR:Q9LMN7"/>
<dbReference type="Proteomes" id="UP000006548">
    <property type="component" value="Chromosome 1"/>
</dbReference>
<dbReference type="ExpressionAtlas" id="Q9LMN7">
    <property type="expression patterns" value="baseline and differential"/>
</dbReference>
<dbReference type="GO" id="GO:0016020">
    <property type="term" value="C:membrane"/>
    <property type="evidence" value="ECO:0007669"/>
    <property type="project" value="UniProtKB-SubCell"/>
</dbReference>
<dbReference type="GO" id="GO:0005524">
    <property type="term" value="F:ATP binding"/>
    <property type="evidence" value="ECO:0007669"/>
    <property type="project" value="UniProtKB-KW"/>
</dbReference>
<dbReference type="GO" id="GO:0005509">
    <property type="term" value="F:calcium ion binding"/>
    <property type="evidence" value="ECO:0007669"/>
    <property type="project" value="InterPro"/>
</dbReference>
<dbReference type="GO" id="GO:0030247">
    <property type="term" value="F:polysaccharide binding"/>
    <property type="evidence" value="ECO:0007669"/>
    <property type="project" value="InterPro"/>
</dbReference>
<dbReference type="GO" id="GO:0106310">
    <property type="term" value="F:protein serine kinase activity"/>
    <property type="evidence" value="ECO:0007669"/>
    <property type="project" value="RHEA"/>
</dbReference>
<dbReference type="GO" id="GO:0004674">
    <property type="term" value="F:protein serine/threonine kinase activity"/>
    <property type="evidence" value="ECO:0007669"/>
    <property type="project" value="UniProtKB-KW"/>
</dbReference>
<dbReference type="GO" id="GO:0007166">
    <property type="term" value="P:cell surface receptor signaling pathway"/>
    <property type="evidence" value="ECO:0007669"/>
    <property type="project" value="InterPro"/>
</dbReference>
<dbReference type="CDD" id="cd00054">
    <property type="entry name" value="EGF_CA"/>
    <property type="match status" value="1"/>
</dbReference>
<dbReference type="CDD" id="cd14066">
    <property type="entry name" value="STKc_IRAK"/>
    <property type="match status" value="1"/>
</dbReference>
<dbReference type="FunFam" id="1.10.510.10:FF:000084">
    <property type="entry name" value="Wall-associated receptor kinase 2"/>
    <property type="match status" value="1"/>
</dbReference>
<dbReference type="FunFam" id="2.10.25.10:FF:001054">
    <property type="entry name" value="Wall-associated receptor kinase 2"/>
    <property type="match status" value="1"/>
</dbReference>
<dbReference type="FunFam" id="3.30.200.20:FF:000043">
    <property type="entry name" value="Wall-associated receptor kinase 2"/>
    <property type="match status" value="1"/>
</dbReference>
<dbReference type="Gene3D" id="2.10.25.10">
    <property type="entry name" value="Laminin"/>
    <property type="match status" value="2"/>
</dbReference>
<dbReference type="Gene3D" id="3.30.200.20">
    <property type="entry name" value="Phosphorylase Kinase, domain 1"/>
    <property type="match status" value="1"/>
</dbReference>
<dbReference type="Gene3D" id="1.10.510.10">
    <property type="entry name" value="Transferase(Phosphotransferase) domain 1"/>
    <property type="match status" value="1"/>
</dbReference>
<dbReference type="InterPro" id="IPR001881">
    <property type="entry name" value="EGF-like_Ca-bd_dom"/>
</dbReference>
<dbReference type="InterPro" id="IPR000742">
    <property type="entry name" value="EGF-like_dom"/>
</dbReference>
<dbReference type="InterPro" id="IPR000152">
    <property type="entry name" value="EGF-type_Asp/Asn_hydroxyl_site"/>
</dbReference>
<dbReference type="InterPro" id="IPR018097">
    <property type="entry name" value="EGF_Ca-bd_CS"/>
</dbReference>
<dbReference type="InterPro" id="IPR011009">
    <property type="entry name" value="Kinase-like_dom_sf"/>
</dbReference>
<dbReference type="InterPro" id="IPR049883">
    <property type="entry name" value="NOTCH1_EGF-like"/>
</dbReference>
<dbReference type="InterPro" id="IPR000719">
    <property type="entry name" value="Prot_kinase_dom"/>
</dbReference>
<dbReference type="InterPro" id="IPR001245">
    <property type="entry name" value="Ser-Thr/Tyr_kinase_cat_dom"/>
</dbReference>
<dbReference type="InterPro" id="IPR008271">
    <property type="entry name" value="Ser/Thr_kinase_AS"/>
</dbReference>
<dbReference type="InterPro" id="IPR045274">
    <property type="entry name" value="WAK-like"/>
</dbReference>
<dbReference type="InterPro" id="IPR025287">
    <property type="entry name" value="WAK_GUB"/>
</dbReference>
<dbReference type="PANTHER" id="PTHR27005:SF524">
    <property type="entry name" value="WALL-ASSOCIATED RECEPTOR KINASE 2-RELATED"/>
    <property type="match status" value="1"/>
</dbReference>
<dbReference type="PANTHER" id="PTHR27005">
    <property type="entry name" value="WALL-ASSOCIATED RECEPTOR KINASE-LIKE 21"/>
    <property type="match status" value="1"/>
</dbReference>
<dbReference type="Pfam" id="PF07645">
    <property type="entry name" value="EGF_CA"/>
    <property type="match status" value="1"/>
</dbReference>
<dbReference type="Pfam" id="PF13947">
    <property type="entry name" value="GUB_WAK_bind"/>
    <property type="match status" value="1"/>
</dbReference>
<dbReference type="Pfam" id="PF07714">
    <property type="entry name" value="PK_Tyr_Ser-Thr"/>
    <property type="match status" value="1"/>
</dbReference>
<dbReference type="SMART" id="SM00181">
    <property type="entry name" value="EGF"/>
    <property type="match status" value="2"/>
</dbReference>
<dbReference type="SMART" id="SM00179">
    <property type="entry name" value="EGF_CA"/>
    <property type="match status" value="1"/>
</dbReference>
<dbReference type="SMART" id="SM00220">
    <property type="entry name" value="S_TKc"/>
    <property type="match status" value="1"/>
</dbReference>
<dbReference type="SUPFAM" id="SSF57196">
    <property type="entry name" value="EGF/Laminin"/>
    <property type="match status" value="1"/>
</dbReference>
<dbReference type="SUPFAM" id="SSF56112">
    <property type="entry name" value="Protein kinase-like (PK-like)"/>
    <property type="match status" value="1"/>
</dbReference>
<dbReference type="PROSITE" id="PS00010">
    <property type="entry name" value="ASX_HYDROXYL"/>
    <property type="match status" value="1"/>
</dbReference>
<dbReference type="PROSITE" id="PS50026">
    <property type="entry name" value="EGF_3"/>
    <property type="match status" value="2"/>
</dbReference>
<dbReference type="PROSITE" id="PS01187">
    <property type="entry name" value="EGF_CA"/>
    <property type="match status" value="1"/>
</dbReference>
<dbReference type="PROSITE" id="PS50011">
    <property type="entry name" value="PROTEIN_KINASE_DOM"/>
    <property type="match status" value="1"/>
</dbReference>
<dbReference type="PROSITE" id="PS00108">
    <property type="entry name" value="PROTEIN_KINASE_ST"/>
    <property type="match status" value="1"/>
</dbReference>
<reference key="1">
    <citation type="journal article" date="2000" name="Nature">
        <title>Sequence and analysis of chromosome 1 of the plant Arabidopsis thaliana.</title>
        <authorList>
            <person name="Theologis A."/>
            <person name="Ecker J.R."/>
            <person name="Palm C.J."/>
            <person name="Federspiel N.A."/>
            <person name="Kaul S."/>
            <person name="White O."/>
            <person name="Alonso J."/>
            <person name="Altafi H."/>
            <person name="Araujo R."/>
            <person name="Bowman C.L."/>
            <person name="Brooks S.Y."/>
            <person name="Buehler E."/>
            <person name="Chan A."/>
            <person name="Chao Q."/>
            <person name="Chen H."/>
            <person name="Cheuk R.F."/>
            <person name="Chin C.W."/>
            <person name="Chung M.K."/>
            <person name="Conn L."/>
            <person name="Conway A.B."/>
            <person name="Conway A.R."/>
            <person name="Creasy T.H."/>
            <person name="Dewar K."/>
            <person name="Dunn P."/>
            <person name="Etgu P."/>
            <person name="Feldblyum T.V."/>
            <person name="Feng J.-D."/>
            <person name="Fong B."/>
            <person name="Fujii C.Y."/>
            <person name="Gill J.E."/>
            <person name="Goldsmith A.D."/>
            <person name="Haas B."/>
            <person name="Hansen N.F."/>
            <person name="Hughes B."/>
            <person name="Huizar L."/>
            <person name="Hunter J.L."/>
            <person name="Jenkins J."/>
            <person name="Johnson-Hopson C."/>
            <person name="Khan S."/>
            <person name="Khaykin E."/>
            <person name="Kim C.J."/>
            <person name="Koo H.L."/>
            <person name="Kremenetskaia I."/>
            <person name="Kurtz D.B."/>
            <person name="Kwan A."/>
            <person name="Lam B."/>
            <person name="Langin-Hooper S."/>
            <person name="Lee A."/>
            <person name="Lee J.M."/>
            <person name="Lenz C.A."/>
            <person name="Li J.H."/>
            <person name="Li Y.-P."/>
            <person name="Lin X."/>
            <person name="Liu S.X."/>
            <person name="Liu Z.A."/>
            <person name="Luros J.S."/>
            <person name="Maiti R."/>
            <person name="Marziali A."/>
            <person name="Militscher J."/>
            <person name="Miranda M."/>
            <person name="Nguyen M."/>
            <person name="Nierman W.C."/>
            <person name="Osborne B.I."/>
            <person name="Pai G."/>
            <person name="Peterson J."/>
            <person name="Pham P.K."/>
            <person name="Rizzo M."/>
            <person name="Rooney T."/>
            <person name="Rowley D."/>
            <person name="Sakano H."/>
            <person name="Salzberg S.L."/>
            <person name="Schwartz J.R."/>
            <person name="Shinn P."/>
            <person name="Southwick A.M."/>
            <person name="Sun H."/>
            <person name="Tallon L.J."/>
            <person name="Tambunga G."/>
            <person name="Toriumi M.J."/>
            <person name="Town C.D."/>
            <person name="Utterback T."/>
            <person name="Van Aken S."/>
            <person name="Vaysberg M."/>
            <person name="Vysotskaia V.S."/>
            <person name="Walker M."/>
            <person name="Wu D."/>
            <person name="Yu G."/>
            <person name="Fraser C.M."/>
            <person name="Venter J.C."/>
            <person name="Davis R.W."/>
        </authorList>
    </citation>
    <scope>NUCLEOTIDE SEQUENCE [LARGE SCALE GENOMIC DNA]</scope>
    <source>
        <strain>cv. Columbia</strain>
    </source>
</reference>
<reference key="2">
    <citation type="journal article" date="2017" name="Plant J.">
        <title>Araport11: a complete reannotation of the Arabidopsis thaliana reference genome.</title>
        <authorList>
            <person name="Cheng C.Y."/>
            <person name="Krishnakumar V."/>
            <person name="Chan A.P."/>
            <person name="Thibaud-Nissen F."/>
            <person name="Schobel S."/>
            <person name="Town C.D."/>
        </authorList>
    </citation>
    <scope>GENOME REANNOTATION</scope>
    <source>
        <strain>cv. Columbia</strain>
    </source>
</reference>
<reference key="3">
    <citation type="journal article" date="1999" name="Plant Mol. Biol.">
        <title>A cluster of five cell wall-associated receptor kinase genes, Wak1-5, are expressed in specific organs of Arabidopsis.</title>
        <authorList>
            <person name="He Z.-H."/>
            <person name="Cheeseman I."/>
            <person name="He D."/>
            <person name="Kohorn B.D."/>
        </authorList>
    </citation>
    <scope>TISSUE SPECIFICITY</scope>
    <scope>INDUCTION</scope>
</reference>
<reference key="4">
    <citation type="journal article" date="2002" name="Plant Physiol.">
        <title>The cell wall-associated kinase (WAK) and WAK-like kinase gene family.</title>
        <authorList>
            <person name="Verica J.A."/>
            <person name="He Z.-H."/>
        </authorList>
    </citation>
    <scope>GENE FAMILY ORGANIZATION</scope>
</reference>
<keyword id="KW-0067">ATP-binding</keyword>
<keyword id="KW-0106">Calcium</keyword>
<keyword id="KW-1015">Disulfide bond</keyword>
<keyword id="KW-0245">EGF-like domain</keyword>
<keyword id="KW-0325">Glycoprotein</keyword>
<keyword id="KW-0418">Kinase</keyword>
<keyword id="KW-0472">Membrane</keyword>
<keyword id="KW-0547">Nucleotide-binding</keyword>
<keyword id="KW-0597">Phosphoprotein</keyword>
<keyword id="KW-1185">Reference proteome</keyword>
<keyword id="KW-0677">Repeat</keyword>
<keyword id="KW-0723">Serine/threonine-protein kinase</keyword>
<keyword id="KW-0732">Signal</keyword>
<keyword id="KW-0808">Transferase</keyword>
<keyword id="KW-0812">Transmembrane</keyword>
<keyword id="KW-1133">Transmembrane helix</keyword>
<comment type="function">
    <text>Serine/threonine-protein kinase that may function as a signaling receptor of extracellular matrix component. Binding to pectin may have significance in the control of cell expansion, morphogenesis and development.</text>
</comment>
<comment type="catalytic activity">
    <reaction>
        <text>L-seryl-[protein] + ATP = O-phospho-L-seryl-[protein] + ADP + H(+)</text>
        <dbReference type="Rhea" id="RHEA:17989"/>
        <dbReference type="Rhea" id="RHEA-COMP:9863"/>
        <dbReference type="Rhea" id="RHEA-COMP:11604"/>
        <dbReference type="ChEBI" id="CHEBI:15378"/>
        <dbReference type="ChEBI" id="CHEBI:29999"/>
        <dbReference type="ChEBI" id="CHEBI:30616"/>
        <dbReference type="ChEBI" id="CHEBI:83421"/>
        <dbReference type="ChEBI" id="CHEBI:456216"/>
    </reaction>
</comment>
<comment type="catalytic activity">
    <reaction>
        <text>L-threonyl-[protein] + ATP = O-phospho-L-threonyl-[protein] + ADP + H(+)</text>
        <dbReference type="Rhea" id="RHEA:46608"/>
        <dbReference type="Rhea" id="RHEA-COMP:11060"/>
        <dbReference type="Rhea" id="RHEA-COMP:11605"/>
        <dbReference type="ChEBI" id="CHEBI:15378"/>
        <dbReference type="ChEBI" id="CHEBI:30013"/>
        <dbReference type="ChEBI" id="CHEBI:30616"/>
        <dbReference type="ChEBI" id="CHEBI:61977"/>
        <dbReference type="ChEBI" id="CHEBI:456216"/>
    </reaction>
</comment>
<comment type="subcellular location">
    <subcellularLocation>
        <location evidence="7">Membrane</location>
        <topology evidence="7">Single-pass type I membrane protein</topology>
    </subcellularLocation>
</comment>
<comment type="tissue specificity">
    <text evidence="6">Predominantly expressed in green tissues such as stems and leaves.</text>
</comment>
<comment type="induction">
    <text evidence="6">Induced by INA.</text>
</comment>
<comment type="similarity">
    <text evidence="4">Belongs to the protein kinase superfamily. Ser/Thr protein kinase family.</text>
</comment>
<gene>
    <name type="primary">WAK5</name>
    <name type="ordered locus">At1g21230</name>
    <name type="ORF">F16F4.9</name>
</gene>
<sequence>MKVHSLFLMAIFFYLAYTQLVKAQPRDDCQTRCGDVPIDYPFGISTGCYYPGDDSFNITCEEDKPNVLSNIEVLNFNHSGQLRGLIPRSTVCYDQQTNNDFESLWFRLDNLSFSPNNKFTLVGCNAWALLSTFGIQNYSTGCMSLCDTPPPPNSKCNGVGCCRTEVSIPLDSHRIETQPSRFENMTSVEHFNPCSYAFFVEDGMFNFSSLEDLKDLRNVTRFPVLLDWSIGNQTCEQVVGRNICGGNSTCFDSTRGKGYNCKCLQGFDGNPYLSDGCQDINECTTRIHNCSDTSTCENTLGSFHCQCPSGSDLNTTTMSCIDTPKEEPKYLGWTTVLLGTTIGFLIILLTISYIQQKMRHRKNTELRQQFFEQNGGGMLIQRLSGAGPSNVDVKIFTEEGMKEATDGYNESRILGQGGQGTVYKGILQDNSIVAIKKARLGDRSQVEQFINEVLVLSQINHRNVVKLLGCCLETEVPLLVYEFISSGTLFDHLHGSMFDSSLTWEHRLRIAIEVAGTLAYLHSYASIPIIHRDVKTANILLDENLTAKVADFGASRLIPMDQEQLTTMVQGTLGYLDPEYYNTGLLNEKSDVYSFGVVLMELLSGEKALCFERPQSSKHLVSYFVSAMKENRLHEIIDGQVMNEYNQREIQESARIAVECTRIMGEERPSMKEVAAELEALRVKTTKHQWSDQYPKEVEHLLGVQILSTQGDTSSIGYDSIQNVTRLDIETGR</sequence>
<evidence type="ECO:0000250" key="1">
    <source>
        <dbReference type="UniProtKB" id="O48814"/>
    </source>
</evidence>
<evidence type="ECO:0000255" key="2"/>
<evidence type="ECO:0000255" key="3">
    <source>
        <dbReference type="PROSITE-ProRule" id="PRU00076"/>
    </source>
</evidence>
<evidence type="ECO:0000255" key="4">
    <source>
        <dbReference type="PROSITE-ProRule" id="PRU00159"/>
    </source>
</evidence>
<evidence type="ECO:0000255" key="5">
    <source>
        <dbReference type="PROSITE-ProRule" id="PRU10027"/>
    </source>
</evidence>
<evidence type="ECO:0000269" key="6">
    <source>
    </source>
</evidence>
<evidence type="ECO:0000305" key="7"/>
<accession>Q9LMN7</accession>
<name>WAK5_ARATH</name>
<protein>
    <recommendedName>
        <fullName>Wall-associated receptor kinase 5</fullName>
        <ecNumber>2.7.11.-</ecNumber>
    </recommendedName>
</protein>